<feature type="chain" id="PRO_1000185368" description="Phosphoglucosamine mutase">
    <location>
        <begin position="1"/>
        <end position="445"/>
    </location>
</feature>
<feature type="active site" description="Phosphoserine intermediate" evidence="1">
    <location>
        <position position="102"/>
    </location>
</feature>
<feature type="binding site" description="via phosphate group" evidence="1">
    <location>
        <position position="102"/>
    </location>
    <ligand>
        <name>Mg(2+)</name>
        <dbReference type="ChEBI" id="CHEBI:18420"/>
    </ligand>
</feature>
<feature type="binding site" evidence="1">
    <location>
        <position position="241"/>
    </location>
    <ligand>
        <name>Mg(2+)</name>
        <dbReference type="ChEBI" id="CHEBI:18420"/>
    </ligand>
</feature>
<feature type="binding site" evidence="1">
    <location>
        <position position="243"/>
    </location>
    <ligand>
        <name>Mg(2+)</name>
        <dbReference type="ChEBI" id="CHEBI:18420"/>
    </ligand>
</feature>
<feature type="binding site" evidence="1">
    <location>
        <position position="245"/>
    </location>
    <ligand>
        <name>Mg(2+)</name>
        <dbReference type="ChEBI" id="CHEBI:18420"/>
    </ligand>
</feature>
<feature type="modified residue" description="Phosphoserine" evidence="1">
    <location>
        <position position="102"/>
    </location>
</feature>
<reference key="1">
    <citation type="journal article" date="2009" name="PLoS Genet.">
        <title>Organised genome dynamics in the Escherichia coli species results in highly diverse adaptive paths.</title>
        <authorList>
            <person name="Touchon M."/>
            <person name="Hoede C."/>
            <person name="Tenaillon O."/>
            <person name="Barbe V."/>
            <person name="Baeriswyl S."/>
            <person name="Bidet P."/>
            <person name="Bingen E."/>
            <person name="Bonacorsi S."/>
            <person name="Bouchier C."/>
            <person name="Bouvet O."/>
            <person name="Calteau A."/>
            <person name="Chiapello H."/>
            <person name="Clermont O."/>
            <person name="Cruveiller S."/>
            <person name="Danchin A."/>
            <person name="Diard M."/>
            <person name="Dossat C."/>
            <person name="Karoui M.E."/>
            <person name="Frapy E."/>
            <person name="Garry L."/>
            <person name="Ghigo J.M."/>
            <person name="Gilles A.M."/>
            <person name="Johnson J."/>
            <person name="Le Bouguenec C."/>
            <person name="Lescat M."/>
            <person name="Mangenot S."/>
            <person name="Martinez-Jehanne V."/>
            <person name="Matic I."/>
            <person name="Nassif X."/>
            <person name="Oztas S."/>
            <person name="Petit M.A."/>
            <person name="Pichon C."/>
            <person name="Rouy Z."/>
            <person name="Ruf C.S."/>
            <person name="Schneider D."/>
            <person name="Tourret J."/>
            <person name="Vacherie B."/>
            <person name="Vallenet D."/>
            <person name="Medigue C."/>
            <person name="Rocha E.P.C."/>
            <person name="Denamur E."/>
        </authorList>
    </citation>
    <scope>NUCLEOTIDE SEQUENCE [LARGE SCALE GENOMIC DNA]</scope>
    <source>
        <strain>ED1a</strain>
    </source>
</reference>
<keyword id="KW-0413">Isomerase</keyword>
<keyword id="KW-0460">Magnesium</keyword>
<keyword id="KW-0479">Metal-binding</keyword>
<keyword id="KW-0597">Phosphoprotein</keyword>
<proteinExistence type="inferred from homology"/>
<accession>B7N0V9</accession>
<organism>
    <name type="scientific">Escherichia coli O81 (strain ED1a)</name>
    <dbReference type="NCBI Taxonomy" id="585397"/>
    <lineage>
        <taxon>Bacteria</taxon>
        <taxon>Pseudomonadati</taxon>
        <taxon>Pseudomonadota</taxon>
        <taxon>Gammaproteobacteria</taxon>
        <taxon>Enterobacterales</taxon>
        <taxon>Enterobacteriaceae</taxon>
        <taxon>Escherichia</taxon>
    </lineage>
</organism>
<evidence type="ECO:0000255" key="1">
    <source>
        <dbReference type="HAMAP-Rule" id="MF_01554"/>
    </source>
</evidence>
<comment type="function">
    <text evidence="1">Catalyzes the conversion of glucosamine-6-phosphate to glucosamine-1-phosphate.</text>
</comment>
<comment type="catalytic activity">
    <reaction evidence="1">
        <text>alpha-D-glucosamine 1-phosphate = D-glucosamine 6-phosphate</text>
        <dbReference type="Rhea" id="RHEA:23424"/>
        <dbReference type="ChEBI" id="CHEBI:58516"/>
        <dbReference type="ChEBI" id="CHEBI:58725"/>
        <dbReference type="EC" id="5.4.2.10"/>
    </reaction>
</comment>
<comment type="cofactor">
    <cofactor evidence="1">
        <name>Mg(2+)</name>
        <dbReference type="ChEBI" id="CHEBI:18420"/>
    </cofactor>
    <text evidence="1">Binds 1 Mg(2+) ion per subunit.</text>
</comment>
<comment type="PTM">
    <text evidence="1">Activated by phosphorylation.</text>
</comment>
<comment type="similarity">
    <text evidence="1">Belongs to the phosphohexose mutase family.</text>
</comment>
<name>GLMM_ECO81</name>
<gene>
    <name evidence="1" type="primary">glmM</name>
    <name type="ordered locus">ECED1_3834</name>
</gene>
<sequence>MSNRKYFGTDGIRGRVGDAPITPDFVLKLGWAAGKVLARHGSRKIIIGKDTRISGYMLESALEAGLAAAGLSALFTGPMPTPAVAYLTRTFRAEAGIVISASHNPFYDNGIKFFSIDGTKLPDAVEEAIEAEMEKEISCVDSAELGKASRIVDAAGRYIEFCKATFPNELSLSELKIVVDCANGATYHIAPNVLRELGANVIAIGCEPNGVNINAEVGATDVRALQARVLAEKADLGIAFDGDGDRVIMVDHEGNKVDGDQIMYIIAREGLRQGQLRGGAVGTLMSNMGLELALKQLGIPFERAKVGDRYVLEKMQEKGWRIGAENSGHVILLDKTTTGDGIVAGLQVLAAMARNHMSLHDLCSGMKMFPQILVNVRYTAGSGDPLEHESVKAVTAEVEAALGSRGRVLLRKSGTEPLIRVMVEGEDEAQVTEFAHRIADAVKAV</sequence>
<dbReference type="EC" id="5.4.2.10" evidence="1"/>
<dbReference type="EMBL" id="CU928162">
    <property type="protein sequence ID" value="CAR09977.2"/>
    <property type="molecule type" value="Genomic_DNA"/>
</dbReference>
<dbReference type="RefSeq" id="WP_000071144.1">
    <property type="nucleotide sequence ID" value="NC_011745.1"/>
</dbReference>
<dbReference type="SMR" id="B7N0V9"/>
<dbReference type="KEGG" id="ecq:ECED1_3834"/>
<dbReference type="HOGENOM" id="CLU_016950_7_0_6"/>
<dbReference type="Proteomes" id="UP000000748">
    <property type="component" value="Chromosome"/>
</dbReference>
<dbReference type="GO" id="GO:0005829">
    <property type="term" value="C:cytosol"/>
    <property type="evidence" value="ECO:0007669"/>
    <property type="project" value="TreeGrafter"/>
</dbReference>
<dbReference type="GO" id="GO:0000287">
    <property type="term" value="F:magnesium ion binding"/>
    <property type="evidence" value="ECO:0007669"/>
    <property type="project" value="UniProtKB-UniRule"/>
</dbReference>
<dbReference type="GO" id="GO:0008966">
    <property type="term" value="F:phosphoglucosamine mutase activity"/>
    <property type="evidence" value="ECO:0007669"/>
    <property type="project" value="UniProtKB-UniRule"/>
</dbReference>
<dbReference type="GO" id="GO:0004615">
    <property type="term" value="F:phosphomannomutase activity"/>
    <property type="evidence" value="ECO:0007669"/>
    <property type="project" value="TreeGrafter"/>
</dbReference>
<dbReference type="GO" id="GO:0005975">
    <property type="term" value="P:carbohydrate metabolic process"/>
    <property type="evidence" value="ECO:0007669"/>
    <property type="project" value="InterPro"/>
</dbReference>
<dbReference type="GO" id="GO:0009252">
    <property type="term" value="P:peptidoglycan biosynthetic process"/>
    <property type="evidence" value="ECO:0007669"/>
    <property type="project" value="TreeGrafter"/>
</dbReference>
<dbReference type="GO" id="GO:0006048">
    <property type="term" value="P:UDP-N-acetylglucosamine biosynthetic process"/>
    <property type="evidence" value="ECO:0007669"/>
    <property type="project" value="TreeGrafter"/>
</dbReference>
<dbReference type="CDD" id="cd05802">
    <property type="entry name" value="GlmM"/>
    <property type="match status" value="1"/>
</dbReference>
<dbReference type="FunFam" id="3.30.310.50:FF:000001">
    <property type="entry name" value="Phosphoglucosamine mutase"/>
    <property type="match status" value="1"/>
</dbReference>
<dbReference type="FunFam" id="3.40.120.10:FF:000001">
    <property type="entry name" value="Phosphoglucosamine mutase"/>
    <property type="match status" value="1"/>
</dbReference>
<dbReference type="FunFam" id="3.40.120.10:FF:000002">
    <property type="entry name" value="Phosphoglucosamine mutase"/>
    <property type="match status" value="1"/>
</dbReference>
<dbReference type="Gene3D" id="3.40.120.10">
    <property type="entry name" value="Alpha-D-Glucose-1,6-Bisphosphate, subunit A, domain 3"/>
    <property type="match status" value="3"/>
</dbReference>
<dbReference type="Gene3D" id="3.30.310.50">
    <property type="entry name" value="Alpha-D-phosphohexomutase, C-terminal domain"/>
    <property type="match status" value="1"/>
</dbReference>
<dbReference type="HAMAP" id="MF_01554_B">
    <property type="entry name" value="GlmM_B"/>
    <property type="match status" value="1"/>
</dbReference>
<dbReference type="InterPro" id="IPR005844">
    <property type="entry name" value="A-D-PHexomutase_a/b/a-I"/>
</dbReference>
<dbReference type="InterPro" id="IPR016055">
    <property type="entry name" value="A-D-PHexomutase_a/b/a-I/II/III"/>
</dbReference>
<dbReference type="InterPro" id="IPR005845">
    <property type="entry name" value="A-D-PHexomutase_a/b/a-II"/>
</dbReference>
<dbReference type="InterPro" id="IPR005846">
    <property type="entry name" value="A-D-PHexomutase_a/b/a-III"/>
</dbReference>
<dbReference type="InterPro" id="IPR005843">
    <property type="entry name" value="A-D-PHexomutase_C"/>
</dbReference>
<dbReference type="InterPro" id="IPR036900">
    <property type="entry name" value="A-D-PHexomutase_C_sf"/>
</dbReference>
<dbReference type="InterPro" id="IPR016066">
    <property type="entry name" value="A-D-PHexomutase_CS"/>
</dbReference>
<dbReference type="InterPro" id="IPR005841">
    <property type="entry name" value="Alpha-D-phosphohexomutase_SF"/>
</dbReference>
<dbReference type="InterPro" id="IPR006352">
    <property type="entry name" value="GlmM_bact"/>
</dbReference>
<dbReference type="InterPro" id="IPR050060">
    <property type="entry name" value="Phosphoglucosamine_mutase"/>
</dbReference>
<dbReference type="NCBIfam" id="TIGR01455">
    <property type="entry name" value="glmM"/>
    <property type="match status" value="1"/>
</dbReference>
<dbReference type="NCBIfam" id="NF008139">
    <property type="entry name" value="PRK10887.1"/>
    <property type="match status" value="1"/>
</dbReference>
<dbReference type="PANTHER" id="PTHR42946:SF1">
    <property type="entry name" value="PHOSPHOGLUCOMUTASE (ALPHA-D-GLUCOSE-1,6-BISPHOSPHATE-DEPENDENT)"/>
    <property type="match status" value="1"/>
</dbReference>
<dbReference type="PANTHER" id="PTHR42946">
    <property type="entry name" value="PHOSPHOHEXOSE MUTASE"/>
    <property type="match status" value="1"/>
</dbReference>
<dbReference type="Pfam" id="PF02878">
    <property type="entry name" value="PGM_PMM_I"/>
    <property type="match status" value="1"/>
</dbReference>
<dbReference type="Pfam" id="PF02879">
    <property type="entry name" value="PGM_PMM_II"/>
    <property type="match status" value="1"/>
</dbReference>
<dbReference type="Pfam" id="PF02880">
    <property type="entry name" value="PGM_PMM_III"/>
    <property type="match status" value="1"/>
</dbReference>
<dbReference type="Pfam" id="PF00408">
    <property type="entry name" value="PGM_PMM_IV"/>
    <property type="match status" value="1"/>
</dbReference>
<dbReference type="PRINTS" id="PR00509">
    <property type="entry name" value="PGMPMM"/>
</dbReference>
<dbReference type="SUPFAM" id="SSF55957">
    <property type="entry name" value="Phosphoglucomutase, C-terminal domain"/>
    <property type="match status" value="1"/>
</dbReference>
<dbReference type="SUPFAM" id="SSF53738">
    <property type="entry name" value="Phosphoglucomutase, first 3 domains"/>
    <property type="match status" value="3"/>
</dbReference>
<dbReference type="PROSITE" id="PS00710">
    <property type="entry name" value="PGM_PMM"/>
    <property type="match status" value="1"/>
</dbReference>
<protein>
    <recommendedName>
        <fullName evidence="1">Phosphoglucosamine mutase</fullName>
        <ecNumber evidence="1">5.4.2.10</ecNumber>
    </recommendedName>
</protein>